<reference key="1">
    <citation type="journal article" date="1988" name="EMBO J.">
        <title>Glycine-rich cell wall proteins in bean: gene structure and association of the protein with the vascular system.</title>
        <authorList>
            <person name="Keller B."/>
            <person name="Sauer N."/>
            <person name="Lamb C.J."/>
        </authorList>
    </citation>
    <scope>NUCLEOTIDE SEQUENCE [GENOMIC DNA]</scope>
    <scope>TISSUE SPECIFICITY</scope>
    <source>
        <strain>cv. Tendergreen</strain>
    </source>
</reference>
<comment type="function">
    <text evidence="4">Responsible for plasticity of the cell wall.</text>
</comment>
<comment type="subcellular location">
    <subcellularLocation>
        <location evidence="4">Secreted</location>
        <location evidence="4">Cell wall</location>
    </subcellularLocation>
</comment>
<comment type="tissue specificity">
    <text evidence="3">Expressed in young hypocotyls.</text>
</comment>
<evidence type="ECO:0000255" key="1"/>
<evidence type="ECO:0000256" key="2">
    <source>
        <dbReference type="SAM" id="MobiDB-lite"/>
    </source>
</evidence>
<evidence type="ECO:0000269" key="3">
    <source>
    </source>
</evidence>
<evidence type="ECO:0000305" key="4"/>
<accession>P10495</accession>
<keyword id="KW-0134">Cell wall</keyword>
<keyword id="KW-0961">Cell wall biogenesis/degradation</keyword>
<keyword id="KW-0677">Repeat</keyword>
<keyword id="KW-0964">Secreted</keyword>
<keyword id="KW-0732">Signal</keyword>
<name>GRP1_PHAVU</name>
<protein>
    <recommendedName>
        <fullName>Glycine-rich cell wall structural protein 1.0</fullName>
        <shortName>GRP 1.0</shortName>
    </recommendedName>
</protein>
<proteinExistence type="evidence at transcript level"/>
<feature type="signal peptide" evidence="1">
    <location>
        <begin position="1"/>
        <end position="30"/>
    </location>
</feature>
<feature type="chain" id="PRO_0000021378" description="Glycine-rich cell wall structural protein 1.0">
    <location>
        <begin position="31"/>
        <end position="252"/>
    </location>
</feature>
<feature type="region of interest" description="Disordered" evidence="2">
    <location>
        <begin position="231"/>
        <end position="252"/>
    </location>
</feature>
<sequence length="252" mass="19957">MATSKVLLSNVLFVFVCFGICSAARTLLTLEDRVNLHVGTVVGGYGGGGGSGGGGGGAAVELGGGGYGEGAGGGEGAGAGYGAAGGGHGGGGGNGGGGGGGADGGGYGGGAGKGGGEGYGGGGANGGGYGGGGGSGGGGGGGAGGAGSGYGGGEGSGAGGGYGGANGGGGGGNGGGGGGGSGGAHGGGAAGGGEGAGQGAGGGYGGGAAGGGGRGSGGGGGGGYGGGGARGSGYGGGGGSGEGGGHGGGYYP</sequence>
<dbReference type="EMBL" id="X13595">
    <property type="protein sequence ID" value="CAA31931.1"/>
    <property type="molecule type" value="Genomic_DNA"/>
</dbReference>
<dbReference type="PIR" id="S01821">
    <property type="entry name" value="S01821"/>
</dbReference>
<dbReference type="SMR" id="P10495"/>
<dbReference type="eggNOG" id="ENOG502QU0K">
    <property type="taxonomic scope" value="Eukaryota"/>
</dbReference>
<dbReference type="GO" id="GO:0005576">
    <property type="term" value="C:extracellular region"/>
    <property type="evidence" value="ECO:0007669"/>
    <property type="project" value="UniProtKB-KW"/>
</dbReference>
<dbReference type="GO" id="GO:0071555">
    <property type="term" value="P:cell wall organization"/>
    <property type="evidence" value="ECO:0007669"/>
    <property type="project" value="UniProtKB-KW"/>
</dbReference>
<organism>
    <name type="scientific">Phaseolus vulgaris</name>
    <name type="common">Kidney bean</name>
    <name type="synonym">French bean</name>
    <dbReference type="NCBI Taxonomy" id="3885"/>
    <lineage>
        <taxon>Eukaryota</taxon>
        <taxon>Viridiplantae</taxon>
        <taxon>Streptophyta</taxon>
        <taxon>Embryophyta</taxon>
        <taxon>Tracheophyta</taxon>
        <taxon>Spermatophyta</taxon>
        <taxon>Magnoliopsida</taxon>
        <taxon>eudicotyledons</taxon>
        <taxon>Gunneridae</taxon>
        <taxon>Pentapetalae</taxon>
        <taxon>rosids</taxon>
        <taxon>fabids</taxon>
        <taxon>Fabales</taxon>
        <taxon>Fabaceae</taxon>
        <taxon>Papilionoideae</taxon>
        <taxon>50 kb inversion clade</taxon>
        <taxon>NPAAA clade</taxon>
        <taxon>indigoferoid/millettioid clade</taxon>
        <taxon>Phaseoleae</taxon>
        <taxon>Phaseolus</taxon>
    </lineage>
</organism>